<proteinExistence type="inferred from homology"/>
<reference key="1">
    <citation type="journal article" date="1999" name="Nature">
        <title>Evidence for lateral gene transfer between Archaea and Bacteria from genome sequence of Thermotoga maritima.</title>
        <authorList>
            <person name="Nelson K.E."/>
            <person name="Clayton R.A."/>
            <person name="Gill S.R."/>
            <person name="Gwinn M.L."/>
            <person name="Dodson R.J."/>
            <person name="Haft D.H."/>
            <person name="Hickey E.K."/>
            <person name="Peterson J.D."/>
            <person name="Nelson W.C."/>
            <person name="Ketchum K.A."/>
            <person name="McDonald L.A."/>
            <person name="Utterback T.R."/>
            <person name="Malek J.A."/>
            <person name="Linher K.D."/>
            <person name="Garrett M.M."/>
            <person name="Stewart A.M."/>
            <person name="Cotton M.D."/>
            <person name="Pratt M.S."/>
            <person name="Phillips C.A."/>
            <person name="Richardson D.L."/>
            <person name="Heidelberg J.F."/>
            <person name="Sutton G.G."/>
            <person name="Fleischmann R.D."/>
            <person name="Eisen J.A."/>
            <person name="White O."/>
            <person name="Salzberg S.L."/>
            <person name="Smith H.O."/>
            <person name="Venter J.C."/>
            <person name="Fraser C.M."/>
        </authorList>
    </citation>
    <scope>NUCLEOTIDE SEQUENCE [LARGE SCALE GENOMIC DNA]</scope>
    <source>
        <strain>ATCC 43589 / DSM 3109 / JCM 10099 / NBRC 100826 / MSB8</strain>
    </source>
</reference>
<gene>
    <name type="ordered locus">TM_1551</name>
</gene>
<dbReference type="EMBL" id="AE000512">
    <property type="protein sequence ID" value="AAD36617.1"/>
    <property type="molecule type" value="Genomic_DNA"/>
</dbReference>
<dbReference type="PIR" id="B72239">
    <property type="entry name" value="B72239"/>
</dbReference>
<dbReference type="RefSeq" id="NP_229351.1">
    <property type="nucleotide sequence ID" value="NC_000853.1"/>
</dbReference>
<dbReference type="SMR" id="Q9X1N7"/>
<dbReference type="STRING" id="243274.TM_1551"/>
<dbReference type="PaxDb" id="243274-THEMA_06525"/>
<dbReference type="EnsemblBacteria" id="AAD36617">
    <property type="protein sequence ID" value="AAD36617"/>
    <property type="gene ID" value="TM_1551"/>
</dbReference>
<dbReference type="KEGG" id="tma:TM1551"/>
<dbReference type="KEGG" id="tmi:THEMA_06525"/>
<dbReference type="KEGG" id="tmm:Tmari_1559"/>
<dbReference type="KEGG" id="tmw:THMA_1586"/>
<dbReference type="eggNOG" id="COG2078">
    <property type="taxonomic scope" value="Bacteria"/>
</dbReference>
<dbReference type="InParanoid" id="Q9X1N7"/>
<dbReference type="OrthoDB" id="159752at2"/>
<dbReference type="Proteomes" id="UP000008183">
    <property type="component" value="Chromosome"/>
</dbReference>
<dbReference type="Gene3D" id="3.30.700.20">
    <property type="entry name" value="Hypothetical protein ph0010, domain 1"/>
    <property type="match status" value="1"/>
</dbReference>
<dbReference type="Gene3D" id="3.30.1490.150">
    <property type="entry name" value="Hypothetical protein ph0010, domain 2"/>
    <property type="match status" value="1"/>
</dbReference>
<dbReference type="HAMAP" id="MF_00645">
    <property type="entry name" value="AMMECR1"/>
    <property type="match status" value="1"/>
</dbReference>
<dbReference type="InterPro" id="IPR023473">
    <property type="entry name" value="AMMECR1"/>
</dbReference>
<dbReference type="InterPro" id="IPR036071">
    <property type="entry name" value="AMMECR1_dom_sf"/>
</dbReference>
<dbReference type="InterPro" id="IPR002733">
    <property type="entry name" value="AMMECR1_domain"/>
</dbReference>
<dbReference type="InterPro" id="IPR027485">
    <property type="entry name" value="AMMECR1_N"/>
</dbReference>
<dbReference type="InterPro" id="IPR027623">
    <property type="entry name" value="AmmeMemoSam_A"/>
</dbReference>
<dbReference type="InterPro" id="IPR023472">
    <property type="entry name" value="Uncharacterised_MJ0810"/>
</dbReference>
<dbReference type="NCBIfam" id="TIGR04335">
    <property type="entry name" value="AmmeMemoSam_A"/>
    <property type="match status" value="1"/>
</dbReference>
<dbReference type="NCBIfam" id="TIGR00296">
    <property type="entry name" value="TIGR00296 family protein"/>
    <property type="match status" value="1"/>
</dbReference>
<dbReference type="PANTHER" id="PTHR13016:SF0">
    <property type="entry name" value="AMME SYNDROME CANDIDATE GENE 1 PROTEIN"/>
    <property type="match status" value="1"/>
</dbReference>
<dbReference type="PANTHER" id="PTHR13016">
    <property type="entry name" value="AMMECR1 HOMOLOG"/>
    <property type="match status" value="1"/>
</dbReference>
<dbReference type="Pfam" id="PF01871">
    <property type="entry name" value="AMMECR1"/>
    <property type="match status" value="1"/>
</dbReference>
<dbReference type="SUPFAM" id="SSF143447">
    <property type="entry name" value="AMMECR1-like"/>
    <property type="match status" value="1"/>
</dbReference>
<dbReference type="PROSITE" id="PS51112">
    <property type="entry name" value="AMMECR1"/>
    <property type="match status" value="1"/>
</dbReference>
<accession>Q9X1N7</accession>
<sequence length="174" mass="19789">MIGEHPYVKWAIRVIENYVRYGKVIEPDESVPEELFKRRAGAFVTLHKTDGSLRGCIGTYLPTKPNLALEIRDNAIAAATQDPRFPPVSPDELDDIVVHVDILSPPEPVRDISELDPKKYGVIVVKGWRRGLLLPDIEGVDTVEEQLRIAKLKAGIPEWDDDVEIYRFTVERYK</sequence>
<evidence type="ECO:0000255" key="1">
    <source>
        <dbReference type="HAMAP-Rule" id="MF_00645"/>
    </source>
</evidence>
<protein>
    <recommendedName>
        <fullName evidence="1">Protein TM_1551</fullName>
    </recommendedName>
</protein>
<feature type="chain" id="PRO_0000142393" description="Protein TM_1551">
    <location>
        <begin position="1"/>
        <end position="174"/>
    </location>
</feature>
<feature type="domain" description="AMMECR1" evidence="1">
    <location>
        <begin position="2"/>
        <end position="174"/>
    </location>
</feature>
<keyword id="KW-1185">Reference proteome</keyword>
<organism>
    <name type="scientific">Thermotoga maritima (strain ATCC 43589 / DSM 3109 / JCM 10099 / NBRC 100826 / MSB8)</name>
    <dbReference type="NCBI Taxonomy" id="243274"/>
    <lineage>
        <taxon>Bacteria</taxon>
        <taxon>Thermotogati</taxon>
        <taxon>Thermotogota</taxon>
        <taxon>Thermotogae</taxon>
        <taxon>Thermotogales</taxon>
        <taxon>Thermotogaceae</taxon>
        <taxon>Thermotoga</taxon>
    </lineage>
</organism>
<name>Y1551_THEMA</name>